<protein>
    <recommendedName>
        <fullName>Uncharacterized hydrolase SAR1410</fullName>
        <ecNumber>3.-.-.-</ecNumber>
    </recommendedName>
</protein>
<evidence type="ECO:0000305" key="1"/>
<name>Y1410_STAAR</name>
<sequence length="383" mass="43200">MNELEFVTKHRRHLHQHPELSLHEFETTAYIKAFLDSLNIKYDCPLETGVIAYLEGNGSHTIAYRADIDALPILEENDVPYRSQSDHVMHACGHDGHTTTLMLFVQRCKDMQDAGQLPQNVVFIFQPAEETGGGANRLIKAGAFDKYPIEAVFGIHVNPFADEGIAVIRDEEITASATEYRFFLTGLSSHVADKEQGHSCGEALQHVLTQISQIQQFHLNGLKRNIVHIGHFKAGEAINTVPSNGYLEGTIRTYDIDDLTIVKNQMHKIAESVKLLFNVDCEVKFAEGYPPTINSPKLRTQIEDALIKADLNVYDKPTPFLFGEDFSFYGQQLAPAYFVFIGTRNEDKGFVTGLHTSYLNFDEKVLINVVNFYENLLNNYKEV</sequence>
<comment type="similarity">
    <text evidence="1">Belongs to the peptidase M20 family.</text>
</comment>
<dbReference type="EC" id="3.-.-.-"/>
<dbReference type="EMBL" id="BX571856">
    <property type="protein sequence ID" value="CAG40407.1"/>
    <property type="molecule type" value="Genomic_DNA"/>
</dbReference>
<dbReference type="RefSeq" id="WP_001003803.1">
    <property type="nucleotide sequence ID" value="NC_002952.2"/>
</dbReference>
<dbReference type="SMR" id="Q6GH10"/>
<dbReference type="KEGG" id="sar:SAR1410"/>
<dbReference type="HOGENOM" id="CLU_023257_1_0_9"/>
<dbReference type="Proteomes" id="UP000000596">
    <property type="component" value="Chromosome"/>
</dbReference>
<dbReference type="GO" id="GO:0016787">
    <property type="term" value="F:hydrolase activity"/>
    <property type="evidence" value="ECO:0007669"/>
    <property type="project" value="UniProtKB-KW"/>
</dbReference>
<dbReference type="FunFam" id="3.30.70.360:FF:000022">
    <property type="entry name" value="Hippurate hydrolase"/>
    <property type="match status" value="1"/>
</dbReference>
<dbReference type="Gene3D" id="3.30.70.360">
    <property type="match status" value="1"/>
</dbReference>
<dbReference type="Gene3D" id="3.40.630.10">
    <property type="entry name" value="Zn peptidases"/>
    <property type="match status" value="1"/>
</dbReference>
<dbReference type="InterPro" id="IPR017439">
    <property type="entry name" value="Amidohydrolase"/>
</dbReference>
<dbReference type="InterPro" id="IPR036264">
    <property type="entry name" value="Bact_exopeptidase_dim_dom"/>
</dbReference>
<dbReference type="InterPro" id="IPR002933">
    <property type="entry name" value="Peptidase_M20"/>
</dbReference>
<dbReference type="InterPro" id="IPR011650">
    <property type="entry name" value="Peptidase_M20_dimer"/>
</dbReference>
<dbReference type="NCBIfam" id="TIGR01891">
    <property type="entry name" value="amidohydrolases"/>
    <property type="match status" value="1"/>
</dbReference>
<dbReference type="PANTHER" id="PTHR11014:SF63">
    <property type="entry name" value="METALLOPEPTIDASE, PUTATIVE (AFU_ORTHOLOGUE AFUA_6G09600)-RELATED"/>
    <property type="match status" value="1"/>
</dbReference>
<dbReference type="PANTHER" id="PTHR11014">
    <property type="entry name" value="PEPTIDASE M20 FAMILY MEMBER"/>
    <property type="match status" value="1"/>
</dbReference>
<dbReference type="Pfam" id="PF07687">
    <property type="entry name" value="M20_dimer"/>
    <property type="match status" value="1"/>
</dbReference>
<dbReference type="Pfam" id="PF01546">
    <property type="entry name" value="Peptidase_M20"/>
    <property type="match status" value="1"/>
</dbReference>
<dbReference type="PIRSF" id="PIRSF005962">
    <property type="entry name" value="Pept_M20D_amidohydro"/>
    <property type="match status" value="1"/>
</dbReference>
<dbReference type="SUPFAM" id="SSF55031">
    <property type="entry name" value="Bacterial exopeptidase dimerisation domain"/>
    <property type="match status" value="1"/>
</dbReference>
<dbReference type="SUPFAM" id="SSF53187">
    <property type="entry name" value="Zn-dependent exopeptidases"/>
    <property type="match status" value="1"/>
</dbReference>
<organism>
    <name type="scientific">Staphylococcus aureus (strain MRSA252)</name>
    <dbReference type="NCBI Taxonomy" id="282458"/>
    <lineage>
        <taxon>Bacteria</taxon>
        <taxon>Bacillati</taxon>
        <taxon>Bacillota</taxon>
        <taxon>Bacilli</taxon>
        <taxon>Bacillales</taxon>
        <taxon>Staphylococcaceae</taxon>
        <taxon>Staphylococcus</taxon>
    </lineage>
</organism>
<feature type="chain" id="PRO_0000298620" description="Uncharacterized hydrolase SAR1410">
    <location>
        <begin position="1"/>
        <end position="383"/>
    </location>
</feature>
<proteinExistence type="inferred from homology"/>
<accession>Q6GH10</accession>
<keyword id="KW-0378">Hydrolase</keyword>
<gene>
    <name type="ordered locus">SAR1410</name>
</gene>
<reference key="1">
    <citation type="journal article" date="2004" name="Proc. Natl. Acad. Sci. U.S.A.">
        <title>Complete genomes of two clinical Staphylococcus aureus strains: evidence for the rapid evolution of virulence and drug resistance.</title>
        <authorList>
            <person name="Holden M.T.G."/>
            <person name="Feil E.J."/>
            <person name="Lindsay J.A."/>
            <person name="Peacock S.J."/>
            <person name="Day N.P.J."/>
            <person name="Enright M.C."/>
            <person name="Foster T.J."/>
            <person name="Moore C.E."/>
            <person name="Hurst L."/>
            <person name="Atkin R."/>
            <person name="Barron A."/>
            <person name="Bason N."/>
            <person name="Bentley S.D."/>
            <person name="Chillingworth C."/>
            <person name="Chillingworth T."/>
            <person name="Churcher C."/>
            <person name="Clark L."/>
            <person name="Corton C."/>
            <person name="Cronin A."/>
            <person name="Doggett J."/>
            <person name="Dowd L."/>
            <person name="Feltwell T."/>
            <person name="Hance Z."/>
            <person name="Harris B."/>
            <person name="Hauser H."/>
            <person name="Holroyd S."/>
            <person name="Jagels K."/>
            <person name="James K.D."/>
            <person name="Lennard N."/>
            <person name="Line A."/>
            <person name="Mayes R."/>
            <person name="Moule S."/>
            <person name="Mungall K."/>
            <person name="Ormond D."/>
            <person name="Quail M.A."/>
            <person name="Rabbinowitsch E."/>
            <person name="Rutherford K.M."/>
            <person name="Sanders M."/>
            <person name="Sharp S."/>
            <person name="Simmonds M."/>
            <person name="Stevens K."/>
            <person name="Whitehead S."/>
            <person name="Barrell B.G."/>
            <person name="Spratt B.G."/>
            <person name="Parkhill J."/>
        </authorList>
    </citation>
    <scope>NUCLEOTIDE SEQUENCE [LARGE SCALE GENOMIC DNA]</scope>
    <source>
        <strain>MRSA252</strain>
    </source>
</reference>